<reference key="1">
    <citation type="journal article" date="2007" name="PLoS ONE">
        <title>Paradoxical DNA repair and peroxide resistance gene conservation in Bacillus pumilus SAFR-032.</title>
        <authorList>
            <person name="Gioia J."/>
            <person name="Yerrapragada S."/>
            <person name="Qin X."/>
            <person name="Jiang H."/>
            <person name="Igboeli O.C."/>
            <person name="Muzny D."/>
            <person name="Dugan-Rocha S."/>
            <person name="Ding Y."/>
            <person name="Hawes A."/>
            <person name="Liu W."/>
            <person name="Perez L."/>
            <person name="Kovar C."/>
            <person name="Dinh H."/>
            <person name="Lee S."/>
            <person name="Nazareth L."/>
            <person name="Blyth P."/>
            <person name="Holder M."/>
            <person name="Buhay C."/>
            <person name="Tirumalai M.R."/>
            <person name="Liu Y."/>
            <person name="Dasgupta I."/>
            <person name="Bokhetache L."/>
            <person name="Fujita M."/>
            <person name="Karouia F."/>
            <person name="Eswara Moorthy P."/>
            <person name="Siefert J."/>
            <person name="Uzman A."/>
            <person name="Buzumbo P."/>
            <person name="Verma A."/>
            <person name="Zwiya H."/>
            <person name="McWilliams B.D."/>
            <person name="Olowu A."/>
            <person name="Clinkenbeard K.D."/>
            <person name="Newcombe D."/>
            <person name="Golebiewski L."/>
            <person name="Petrosino J.F."/>
            <person name="Nicholson W.L."/>
            <person name="Fox G.E."/>
            <person name="Venkateswaran K."/>
            <person name="Highlander S.K."/>
            <person name="Weinstock G.M."/>
        </authorList>
    </citation>
    <scope>NUCLEOTIDE SEQUENCE [LARGE SCALE GENOMIC DNA]</scope>
    <source>
        <strain>SAFR-032</strain>
    </source>
</reference>
<evidence type="ECO:0000255" key="1">
    <source>
        <dbReference type="HAMAP-Rule" id="MF_02014"/>
    </source>
</evidence>
<evidence type="ECO:0000255" key="2">
    <source>
        <dbReference type="PROSITE-ProRule" id="PRU01118"/>
    </source>
</evidence>
<sequence length="103" mass="11557">MRLKESIIFIGVFSFIVGIFLSLIAVTSHNDPNQYVKIEVQSGDTLWGLADQVNDSKSIDKNAFIDWVTQHNDLASTEIQPGDILVIPVKKEHPFVYQLATVQ</sequence>
<gene>
    <name evidence="1" type="primary">yneA</name>
    <name type="ordered locus">BPUM_1687</name>
</gene>
<comment type="function">
    <text evidence="1">Inhibits cell division during the SOS response. Affects a later stage of the cell division protein assembly, after the assembly of the Z ring, by probably suppressing recruitment of FtsL and/or DivIC to the division machinery.</text>
</comment>
<comment type="subcellular location">
    <subcellularLocation>
        <location evidence="1">Cytoplasm</location>
    </subcellularLocation>
</comment>
<comment type="similarity">
    <text evidence="1">Belongs to the YneA family.</text>
</comment>
<proteinExistence type="inferred from homology"/>
<dbReference type="EMBL" id="CP000813">
    <property type="protein sequence ID" value="ABV62365.1"/>
    <property type="molecule type" value="Genomic_DNA"/>
</dbReference>
<dbReference type="RefSeq" id="WP_012010097.1">
    <property type="nucleotide sequence ID" value="NC_009848.4"/>
</dbReference>
<dbReference type="SMR" id="A8FDP8"/>
<dbReference type="STRING" id="315750.BPUM_1687"/>
<dbReference type="GeneID" id="5620948"/>
<dbReference type="KEGG" id="bpu:BPUM_1687"/>
<dbReference type="eggNOG" id="COG1388">
    <property type="taxonomic scope" value="Bacteria"/>
</dbReference>
<dbReference type="HOGENOM" id="CLU_136034_4_0_9"/>
<dbReference type="OrthoDB" id="2679564at2"/>
<dbReference type="Proteomes" id="UP000001355">
    <property type="component" value="Chromosome"/>
</dbReference>
<dbReference type="GO" id="GO:0005737">
    <property type="term" value="C:cytoplasm"/>
    <property type="evidence" value="ECO:0007669"/>
    <property type="project" value="UniProtKB-SubCell"/>
</dbReference>
<dbReference type="GO" id="GO:0000917">
    <property type="term" value="P:division septum assembly"/>
    <property type="evidence" value="ECO:0007669"/>
    <property type="project" value="UniProtKB-KW"/>
</dbReference>
<dbReference type="GO" id="GO:0006281">
    <property type="term" value="P:DNA repair"/>
    <property type="evidence" value="ECO:0007669"/>
    <property type="project" value="UniProtKB-KW"/>
</dbReference>
<dbReference type="GO" id="GO:0051782">
    <property type="term" value="P:negative regulation of cell division"/>
    <property type="evidence" value="ECO:0007669"/>
    <property type="project" value="UniProtKB-UniRule"/>
</dbReference>
<dbReference type="GO" id="GO:0009432">
    <property type="term" value="P:SOS response"/>
    <property type="evidence" value="ECO:0007669"/>
    <property type="project" value="UniProtKB-UniRule"/>
</dbReference>
<dbReference type="CDD" id="cd00118">
    <property type="entry name" value="LysM"/>
    <property type="match status" value="1"/>
</dbReference>
<dbReference type="Gene3D" id="3.10.350.10">
    <property type="entry name" value="LysM domain"/>
    <property type="match status" value="1"/>
</dbReference>
<dbReference type="HAMAP" id="MF_02014">
    <property type="entry name" value="YneA"/>
    <property type="match status" value="1"/>
</dbReference>
<dbReference type="InterPro" id="IPR022887">
    <property type="entry name" value="Cell_div_suppressor_YneA"/>
</dbReference>
<dbReference type="InterPro" id="IPR018392">
    <property type="entry name" value="LysM_dom"/>
</dbReference>
<dbReference type="InterPro" id="IPR036779">
    <property type="entry name" value="LysM_dom_sf"/>
</dbReference>
<dbReference type="NCBIfam" id="NF010723">
    <property type="entry name" value="PRK14125.1"/>
    <property type="match status" value="1"/>
</dbReference>
<dbReference type="Pfam" id="PF01476">
    <property type="entry name" value="LysM"/>
    <property type="match status" value="1"/>
</dbReference>
<dbReference type="SMART" id="SM00257">
    <property type="entry name" value="LysM"/>
    <property type="match status" value="1"/>
</dbReference>
<dbReference type="SUPFAM" id="SSF54106">
    <property type="entry name" value="LysM domain"/>
    <property type="match status" value="1"/>
</dbReference>
<dbReference type="PROSITE" id="PS51782">
    <property type="entry name" value="LYSM"/>
    <property type="match status" value="1"/>
</dbReference>
<accession>A8FDP8</accession>
<protein>
    <recommendedName>
        <fullName evidence="1">Cell division suppressor protein YneA</fullName>
    </recommendedName>
</protein>
<name>YNEA_BACP2</name>
<organism>
    <name type="scientific">Bacillus pumilus (strain SAFR-032)</name>
    <dbReference type="NCBI Taxonomy" id="315750"/>
    <lineage>
        <taxon>Bacteria</taxon>
        <taxon>Bacillati</taxon>
        <taxon>Bacillota</taxon>
        <taxon>Bacilli</taxon>
        <taxon>Bacillales</taxon>
        <taxon>Bacillaceae</taxon>
        <taxon>Bacillus</taxon>
    </lineage>
</organism>
<feature type="chain" id="PRO_0000346640" description="Cell division suppressor protein YneA">
    <location>
        <begin position="1"/>
        <end position="103"/>
    </location>
</feature>
<feature type="domain" description="LysM" evidence="2">
    <location>
        <begin position="36"/>
        <end position="87"/>
    </location>
</feature>
<keyword id="KW-0131">Cell cycle</keyword>
<keyword id="KW-0132">Cell division</keyword>
<keyword id="KW-0963">Cytoplasm</keyword>
<keyword id="KW-0227">DNA damage</keyword>
<keyword id="KW-0234">DNA repair</keyword>
<keyword id="KW-0717">Septation</keyword>
<keyword id="KW-0742">SOS response</keyword>